<reference key="1">
    <citation type="submission" date="2008-10" db="EMBL/GenBank/DDBJ databases">
        <title>Genome sequence of Bacillus cereus G9842.</title>
        <authorList>
            <person name="Dodson R.J."/>
            <person name="Durkin A.S."/>
            <person name="Rosovitz M.J."/>
            <person name="Rasko D.A."/>
            <person name="Hoffmaster A."/>
            <person name="Ravel J."/>
            <person name="Sutton G."/>
        </authorList>
    </citation>
    <scope>NUCLEOTIDE SEQUENCE [LARGE SCALE GENOMIC DNA]</scope>
    <source>
        <strain>G9842</strain>
    </source>
</reference>
<organism>
    <name type="scientific">Bacillus cereus (strain G9842)</name>
    <dbReference type="NCBI Taxonomy" id="405531"/>
    <lineage>
        <taxon>Bacteria</taxon>
        <taxon>Bacillati</taxon>
        <taxon>Bacillota</taxon>
        <taxon>Bacilli</taxon>
        <taxon>Bacillales</taxon>
        <taxon>Bacillaceae</taxon>
        <taxon>Bacillus</taxon>
        <taxon>Bacillus cereus group</taxon>
    </lineage>
</organism>
<accession>B7IUK1</accession>
<protein>
    <recommendedName>
        <fullName evidence="1">Ribosome maturation factor RimM</fullName>
    </recommendedName>
</protein>
<proteinExistence type="inferred from homology"/>
<feature type="chain" id="PRO_1000196556" description="Ribosome maturation factor RimM">
    <location>
        <begin position="1"/>
        <end position="171"/>
    </location>
</feature>
<feature type="domain" description="PRC barrel" evidence="1">
    <location>
        <begin position="96"/>
        <end position="170"/>
    </location>
</feature>
<gene>
    <name evidence="1" type="primary">rimM</name>
    <name type="ordered locus">BCG9842_B1302</name>
</gene>
<keyword id="KW-0143">Chaperone</keyword>
<keyword id="KW-0963">Cytoplasm</keyword>
<keyword id="KW-0690">Ribosome biogenesis</keyword>
<keyword id="KW-0698">rRNA processing</keyword>
<evidence type="ECO:0000255" key="1">
    <source>
        <dbReference type="HAMAP-Rule" id="MF_00014"/>
    </source>
</evidence>
<name>RIMM_BACC2</name>
<sequence length="171" mass="19509">MTKWFNVGKIVNTHGVRGEIRVISRTDFPEERYKVGNTLYISNEKDTDYLPVKVTSHRQHKTFDLLTFEGYNNVDEVEKFKGSLIKVPEEQLGELAEGEYYYHEIIGCSVVTEEGEALGTIKEILSPGANDVWVIKRPKGQDLLIPYIDDVVLQVNIENKLVTIHVMEGLL</sequence>
<comment type="function">
    <text evidence="1">An accessory protein needed during the final step in the assembly of 30S ribosomal subunit, possibly for assembly of the head region. Essential for efficient processing of 16S rRNA. May be needed both before and after RbfA during the maturation of 16S rRNA. It has affinity for free ribosomal 30S subunits but not for 70S ribosomes.</text>
</comment>
<comment type="subunit">
    <text evidence="1">Binds ribosomal protein uS19.</text>
</comment>
<comment type="subcellular location">
    <subcellularLocation>
        <location evidence="1">Cytoplasm</location>
    </subcellularLocation>
</comment>
<comment type="domain">
    <text evidence="1">The PRC barrel domain binds ribosomal protein uS19.</text>
</comment>
<comment type="similarity">
    <text evidence="1">Belongs to the RimM family.</text>
</comment>
<dbReference type="EMBL" id="CP001186">
    <property type="protein sequence ID" value="ACK96901.1"/>
    <property type="molecule type" value="Genomic_DNA"/>
</dbReference>
<dbReference type="RefSeq" id="WP_000170272.1">
    <property type="nucleotide sequence ID" value="NC_011772.1"/>
</dbReference>
<dbReference type="SMR" id="B7IUK1"/>
<dbReference type="GeneID" id="72450521"/>
<dbReference type="KEGG" id="bcg:BCG9842_B1302"/>
<dbReference type="HOGENOM" id="CLU_077636_3_1_9"/>
<dbReference type="Proteomes" id="UP000006744">
    <property type="component" value="Chromosome"/>
</dbReference>
<dbReference type="GO" id="GO:0005737">
    <property type="term" value="C:cytoplasm"/>
    <property type="evidence" value="ECO:0007669"/>
    <property type="project" value="UniProtKB-SubCell"/>
</dbReference>
<dbReference type="GO" id="GO:0005840">
    <property type="term" value="C:ribosome"/>
    <property type="evidence" value="ECO:0007669"/>
    <property type="project" value="InterPro"/>
</dbReference>
<dbReference type="GO" id="GO:0043022">
    <property type="term" value="F:ribosome binding"/>
    <property type="evidence" value="ECO:0007669"/>
    <property type="project" value="InterPro"/>
</dbReference>
<dbReference type="GO" id="GO:0042274">
    <property type="term" value="P:ribosomal small subunit biogenesis"/>
    <property type="evidence" value="ECO:0007669"/>
    <property type="project" value="UniProtKB-UniRule"/>
</dbReference>
<dbReference type="GO" id="GO:0006364">
    <property type="term" value="P:rRNA processing"/>
    <property type="evidence" value="ECO:0007669"/>
    <property type="project" value="UniProtKB-UniRule"/>
</dbReference>
<dbReference type="Gene3D" id="2.30.30.240">
    <property type="entry name" value="PRC-barrel domain"/>
    <property type="match status" value="1"/>
</dbReference>
<dbReference type="Gene3D" id="2.40.30.60">
    <property type="entry name" value="RimM"/>
    <property type="match status" value="1"/>
</dbReference>
<dbReference type="HAMAP" id="MF_00014">
    <property type="entry name" value="Ribosome_mat_RimM"/>
    <property type="match status" value="1"/>
</dbReference>
<dbReference type="InterPro" id="IPR027275">
    <property type="entry name" value="PRC-brl_dom"/>
</dbReference>
<dbReference type="InterPro" id="IPR011033">
    <property type="entry name" value="PRC_barrel-like_sf"/>
</dbReference>
<dbReference type="InterPro" id="IPR011961">
    <property type="entry name" value="RimM"/>
</dbReference>
<dbReference type="InterPro" id="IPR002676">
    <property type="entry name" value="RimM_N"/>
</dbReference>
<dbReference type="InterPro" id="IPR036976">
    <property type="entry name" value="RimM_N_sf"/>
</dbReference>
<dbReference type="InterPro" id="IPR009000">
    <property type="entry name" value="Transl_B-barrel_sf"/>
</dbReference>
<dbReference type="NCBIfam" id="TIGR02273">
    <property type="entry name" value="16S_RimM"/>
    <property type="match status" value="1"/>
</dbReference>
<dbReference type="PANTHER" id="PTHR33692">
    <property type="entry name" value="RIBOSOME MATURATION FACTOR RIMM"/>
    <property type="match status" value="1"/>
</dbReference>
<dbReference type="PANTHER" id="PTHR33692:SF1">
    <property type="entry name" value="RIBOSOME MATURATION FACTOR RIMM"/>
    <property type="match status" value="1"/>
</dbReference>
<dbReference type="Pfam" id="PF05239">
    <property type="entry name" value="PRC"/>
    <property type="match status" value="1"/>
</dbReference>
<dbReference type="Pfam" id="PF01782">
    <property type="entry name" value="RimM"/>
    <property type="match status" value="1"/>
</dbReference>
<dbReference type="SUPFAM" id="SSF50346">
    <property type="entry name" value="PRC-barrel domain"/>
    <property type="match status" value="1"/>
</dbReference>
<dbReference type="SUPFAM" id="SSF50447">
    <property type="entry name" value="Translation proteins"/>
    <property type="match status" value="1"/>
</dbReference>